<sequence>MSPPSSMCSPVPLLAAASGQNRMTQGQHFLQKV</sequence>
<protein>
    <recommendedName>
        <fullName>Putative tumor antigen NA88-A</fullName>
    </recommendedName>
    <alternativeName>
        <fullName>Cancer/testis antigen 18</fullName>
        <shortName>CT18</shortName>
    </alternativeName>
</protein>
<name>CT18_HUMAN</name>
<evidence type="ECO:0000269" key="1">
    <source>
    </source>
</evidence>
<evidence type="ECO:0000305" key="2"/>
<comment type="tissue specificity">
    <text evidence="1">Expressed in testis and melanoma cell lines.</text>
</comment>
<comment type="caution">
    <text evidence="2">Could be the product of a pseudogene. This peptide sequence originates from a processed pseudogene derived from a retro-transcript of the mRNA coding for VENTX. The protein sequence is translated from a region that corresponds to the 3'-UTR of the original gene.</text>
</comment>
<dbReference type="EMBL" id="AF164963">
    <property type="status" value="NOT_ANNOTATED_CDS"/>
    <property type="molecule type" value="mRNA"/>
</dbReference>
<dbReference type="BioMuta" id="HGNC:30900"/>
<dbReference type="AGR" id="HGNC:30900"/>
<dbReference type="GeneCards" id="VENTXP1"/>
<dbReference type="HGNC" id="HGNC:30900">
    <property type="gene designation" value="VENTXP1"/>
</dbReference>
<dbReference type="neXtProt" id="NX_P0C5K6"/>
<dbReference type="InParanoid" id="P0C5K6"/>
<dbReference type="PAN-GO" id="P0C5K6">
    <property type="GO annotations" value="0 GO annotations based on evolutionary models"/>
</dbReference>
<dbReference type="Pharos" id="P0C5K6">
    <property type="development level" value="Tdark"/>
</dbReference>
<dbReference type="Proteomes" id="UP000005640">
    <property type="component" value="Unplaced"/>
</dbReference>
<proteinExistence type="uncertain"/>
<organism>
    <name type="scientific">Homo sapiens</name>
    <name type="common">Human</name>
    <dbReference type="NCBI Taxonomy" id="9606"/>
    <lineage>
        <taxon>Eukaryota</taxon>
        <taxon>Metazoa</taxon>
        <taxon>Chordata</taxon>
        <taxon>Craniata</taxon>
        <taxon>Vertebrata</taxon>
        <taxon>Euteleostomi</taxon>
        <taxon>Mammalia</taxon>
        <taxon>Eutheria</taxon>
        <taxon>Euarchontoglires</taxon>
        <taxon>Primates</taxon>
        <taxon>Haplorrhini</taxon>
        <taxon>Catarrhini</taxon>
        <taxon>Hominidae</taxon>
        <taxon>Homo</taxon>
    </lineage>
</organism>
<feature type="chain" id="PRO_0000308923" description="Putative tumor antigen NA88-A">
    <location>
        <begin position="1"/>
        <end position="33"/>
    </location>
</feature>
<gene>
    <name type="primary">VENTXP1</name>
</gene>
<reference key="1">
    <citation type="journal article" date="2000" name="J. Exp. Med.">
        <title>A processed pseudogene codes for a new antigen recognized by a CD8(+) T cell clone on melanoma.</title>
        <authorList>
            <person name="Moreau-Aubry A."/>
            <person name="Le Guiner S."/>
            <person name="Labarriere N."/>
            <person name="Gesnel M.-C."/>
            <person name="Jotereau F."/>
            <person name="Breathnach R."/>
        </authorList>
    </citation>
    <scope>NUCLEOTIDE SEQUENCE [MRNA]</scope>
    <scope>TISSUE SPECIFICITY</scope>
    <scope>IDENTIFICATION AS A CANCER/TESTIS ANTIGEN</scope>
</reference>
<accession>P0C5K6</accession>
<keyword id="KW-1185">Reference proteome</keyword>